<name>CWLQ_BACSU</name>
<sequence length="181" mass="18993">MLNSANTTAPSLLSAYGLNSYTSSNSGSVTKAAESTETAVADSASNKHEANQIRSGDFSIDSAIKKAADKYGVDEKLIRAVIKQESGFNAKAVSGAGAMGLMQLMPSTASSLGVSNPLDPQQNVEGGTKYLKQMLDKYDGNVSMALAAYNAGPGNVDRYGGIPPFQETQNYVKKITSVYYA</sequence>
<reference key="1">
    <citation type="journal article" date="1997" name="Nature">
        <title>The complete genome sequence of the Gram-positive bacterium Bacillus subtilis.</title>
        <authorList>
            <person name="Kunst F."/>
            <person name="Ogasawara N."/>
            <person name="Moszer I."/>
            <person name="Albertini A.M."/>
            <person name="Alloni G."/>
            <person name="Azevedo V."/>
            <person name="Bertero M.G."/>
            <person name="Bessieres P."/>
            <person name="Bolotin A."/>
            <person name="Borchert S."/>
            <person name="Borriss R."/>
            <person name="Boursier L."/>
            <person name="Brans A."/>
            <person name="Braun M."/>
            <person name="Brignell S.C."/>
            <person name="Bron S."/>
            <person name="Brouillet S."/>
            <person name="Bruschi C.V."/>
            <person name="Caldwell B."/>
            <person name="Capuano V."/>
            <person name="Carter N.M."/>
            <person name="Choi S.-K."/>
            <person name="Codani J.-J."/>
            <person name="Connerton I.F."/>
            <person name="Cummings N.J."/>
            <person name="Daniel R.A."/>
            <person name="Denizot F."/>
            <person name="Devine K.M."/>
            <person name="Duesterhoeft A."/>
            <person name="Ehrlich S.D."/>
            <person name="Emmerson P.T."/>
            <person name="Entian K.-D."/>
            <person name="Errington J."/>
            <person name="Fabret C."/>
            <person name="Ferrari E."/>
            <person name="Foulger D."/>
            <person name="Fritz C."/>
            <person name="Fujita M."/>
            <person name="Fujita Y."/>
            <person name="Fuma S."/>
            <person name="Galizzi A."/>
            <person name="Galleron N."/>
            <person name="Ghim S.-Y."/>
            <person name="Glaser P."/>
            <person name="Goffeau A."/>
            <person name="Golightly E.J."/>
            <person name="Grandi G."/>
            <person name="Guiseppi G."/>
            <person name="Guy B.J."/>
            <person name="Haga K."/>
            <person name="Haiech J."/>
            <person name="Harwood C.R."/>
            <person name="Henaut A."/>
            <person name="Hilbert H."/>
            <person name="Holsappel S."/>
            <person name="Hosono S."/>
            <person name="Hullo M.-F."/>
            <person name="Itaya M."/>
            <person name="Jones L.-M."/>
            <person name="Joris B."/>
            <person name="Karamata D."/>
            <person name="Kasahara Y."/>
            <person name="Klaerr-Blanchard M."/>
            <person name="Klein C."/>
            <person name="Kobayashi Y."/>
            <person name="Koetter P."/>
            <person name="Koningstein G."/>
            <person name="Krogh S."/>
            <person name="Kumano M."/>
            <person name="Kurita K."/>
            <person name="Lapidus A."/>
            <person name="Lardinois S."/>
            <person name="Lauber J."/>
            <person name="Lazarevic V."/>
            <person name="Lee S.-M."/>
            <person name="Levine A."/>
            <person name="Liu H."/>
            <person name="Masuda S."/>
            <person name="Mauel C."/>
            <person name="Medigue C."/>
            <person name="Medina N."/>
            <person name="Mellado R.P."/>
            <person name="Mizuno M."/>
            <person name="Moestl D."/>
            <person name="Nakai S."/>
            <person name="Noback M."/>
            <person name="Noone D."/>
            <person name="O'Reilly M."/>
            <person name="Ogawa K."/>
            <person name="Ogiwara A."/>
            <person name="Oudega B."/>
            <person name="Park S.-H."/>
            <person name="Parro V."/>
            <person name="Pohl T.M."/>
            <person name="Portetelle D."/>
            <person name="Porwollik S."/>
            <person name="Prescott A.M."/>
            <person name="Presecan E."/>
            <person name="Pujic P."/>
            <person name="Purnelle B."/>
            <person name="Rapoport G."/>
            <person name="Rey M."/>
            <person name="Reynolds S."/>
            <person name="Rieger M."/>
            <person name="Rivolta C."/>
            <person name="Rocha E."/>
            <person name="Roche B."/>
            <person name="Rose M."/>
            <person name="Sadaie Y."/>
            <person name="Sato T."/>
            <person name="Scanlan E."/>
            <person name="Schleich S."/>
            <person name="Schroeter R."/>
            <person name="Scoffone F."/>
            <person name="Sekiguchi J."/>
            <person name="Sekowska A."/>
            <person name="Seror S.J."/>
            <person name="Serror P."/>
            <person name="Shin B.-S."/>
            <person name="Soldo B."/>
            <person name="Sorokin A."/>
            <person name="Tacconi E."/>
            <person name="Takagi T."/>
            <person name="Takahashi H."/>
            <person name="Takemaru K."/>
            <person name="Takeuchi M."/>
            <person name="Tamakoshi A."/>
            <person name="Tanaka T."/>
            <person name="Terpstra P."/>
            <person name="Tognoni A."/>
            <person name="Tosato V."/>
            <person name="Uchiyama S."/>
            <person name="Vandenbol M."/>
            <person name="Vannier F."/>
            <person name="Vassarotti A."/>
            <person name="Viari A."/>
            <person name="Wambutt R."/>
            <person name="Wedler E."/>
            <person name="Wedler H."/>
            <person name="Weitzenegger T."/>
            <person name="Winters P."/>
            <person name="Wipat A."/>
            <person name="Yamamoto H."/>
            <person name="Yamane K."/>
            <person name="Yasumoto K."/>
            <person name="Yata K."/>
            <person name="Yoshida K."/>
            <person name="Yoshikawa H.-F."/>
            <person name="Zumstein E."/>
            <person name="Yoshikawa H."/>
            <person name="Danchin A."/>
        </authorList>
    </citation>
    <scope>NUCLEOTIDE SEQUENCE [LARGE SCALE GENOMIC DNA]</scope>
    <source>
        <strain>168</strain>
    </source>
</reference>
<reference key="2">
    <citation type="journal article" date="2010" name="Biochem. Biophys. Res. Commun.">
        <title>Bacillus subtilis CwlQ (previous YjbJ) is a bifunctional enzyme exhibiting muramidase and soluble-lytic transglycosylase activities.</title>
        <authorList>
            <person name="Sudiarta I.P."/>
            <person name="Fukushima T."/>
            <person name="Sekiguchi J."/>
        </authorList>
    </citation>
    <scope>FUNCTION</scope>
    <scope>CATALYTIC ACTIVITY</scope>
    <scope>BIOPHYSICOCHEMICAL PROPERTIES</scope>
    <scope>MUTAGENESIS OF GLU-85</scope>
    <source>
        <strain>168</strain>
    </source>
</reference>
<reference key="3">
    <citation type="journal article" date="2021" name="J. Bacteriol.">
        <title>CwlQ is required for swarming motility but not flagellar assembly in Bacillus subtilis.</title>
        <authorList>
            <person name="Sanchez S."/>
            <person name="Dunn C.M."/>
            <person name="Kearns D.B."/>
        </authorList>
    </citation>
    <scope>FUNCTION</scope>
    <scope>SUBCELLULAR LOCATION</scope>
    <scope>INDUCTION</scope>
    <scope>DOMAIN</scope>
    <scope>DISRUPTION PHENOTYPE</scope>
    <scope>MUTAGENESIS OF GLU-85</scope>
</reference>
<comment type="function">
    <text evidence="2 3">Exhibits both muramidase and lytic transglycosidase activities (PubMed:20609359). Cleaves the beta-1,4-glycosidic bond between N-acetylmuramic acid and N-acetylglucosamine (MurNAc-GlcNAc) in peptidoglycan, producing both N-acetylmuramic acid and 1,6-anhydro-N-acetylmuramic acid (PubMed:20609359). Is conditionally required for swarming motility and may play a role in flagella function specifically on harder surface environments, but is not required for flagellar assembly (PubMed:33649146).</text>
</comment>
<comment type="catalytic activity">
    <reaction evidence="2">
        <text>Hydrolysis of (1-&gt;4)-beta-linkages between N-acetylmuramic acid and N-acetyl-D-glucosamine residues in a peptidoglycan and between N-acetyl-D-glucosamine residues in chitodextrins.</text>
        <dbReference type="EC" id="3.2.1.17"/>
    </reaction>
</comment>
<comment type="catalytic activity">
    <reaction evidence="2">
        <text>Exolytic cleavage of the (1-&gt;4)-beta-glycosidic linkage between N-acetylmuramic acid (MurNAc) and N-acetylglucosamine (GlcNAc) residues in peptidoglycan, from either the reducing or the non-reducing ends of the peptidoglycan chains, with concomitant formation of a 1,6-anhydrobond in the MurNAc residue.</text>
        <dbReference type="EC" id="4.2.2.n1"/>
    </reaction>
</comment>
<comment type="biophysicochemical properties">
    <phDependence>
        <text evidence="2">Optimum pH is 6.0-6.5.</text>
    </phDependence>
    <temperatureDependence>
        <text evidence="2">Optimum temperature is 37-40 degrees Celsius.</text>
    </temperatureDependence>
</comment>
<comment type="subcellular location">
    <subcellularLocation>
        <location evidence="3">Secreted</location>
    </subcellularLocation>
    <text evidence="3">Is primarily, and likely exclusively, secreted in a manner that depends on FliF and the flagellar type III secretion system (PubMed:33649146). Export is directed by information encoded within the poorly conserved N-terminal domain (PubMed:33649146).</text>
</comment>
<comment type="induction">
    <text evidence="3">Expressed by the motility sigma factor SigD.</text>
</comment>
<comment type="domain">
    <text evidence="3">The N-terminal domain is important for secretion and protein stability.</text>
</comment>
<comment type="disruption phenotype">
    <text evidence="3">Mutants exhibit wild-type swimming motility in liquid, but they exhibit a severe defect in flagellum-dependent swarming motility (PubMed:33649146). Mutants are not defective in flagellar assembly (PubMed:33649146). They have a slight but statistically significant reduction in the number of flagellar hooks and basal bodies (PubMed:33649146).</text>
</comment>
<comment type="similarity">
    <text evidence="5">Belongs to the transglycosylase Slt family.</text>
</comment>
<feature type="chain" id="PRO_0000378085" description="Bifunctional muramidase/lytic transglycosylase CwlQ">
    <location>
        <begin position="1"/>
        <end position="181"/>
    </location>
</feature>
<feature type="active site" evidence="1">
    <location>
        <position position="85"/>
    </location>
</feature>
<feature type="mutagenesis site" description="Lacks both muramidase and transglycosylase activities. Confers a defect in swarming motility." evidence="2 3">
    <original>E</original>
    <variation>A</variation>
    <location>
        <position position="85"/>
    </location>
</feature>
<feature type="mutagenesis site" description="Lacks both muramidase and transglycosylase activities." evidence="2">
    <original>E</original>
    <variation>Q</variation>
    <location>
        <position position="85"/>
    </location>
</feature>
<organism>
    <name type="scientific">Bacillus subtilis (strain 168)</name>
    <dbReference type="NCBI Taxonomy" id="224308"/>
    <lineage>
        <taxon>Bacteria</taxon>
        <taxon>Bacillati</taxon>
        <taxon>Bacillota</taxon>
        <taxon>Bacilli</taxon>
        <taxon>Bacillales</taxon>
        <taxon>Bacillaceae</taxon>
        <taxon>Bacillus</taxon>
    </lineage>
</organism>
<protein>
    <recommendedName>
        <fullName evidence="5">Bifunctional muramidase/lytic transglycosylase CwlQ</fullName>
        <ecNumber evidence="2">3.2.1.17</ecNumber>
        <ecNumber evidence="2">4.2.2.n1</ecNumber>
    </recommendedName>
</protein>
<dbReference type="EC" id="3.2.1.17" evidence="2"/>
<dbReference type="EC" id="4.2.2.n1" evidence="2"/>
<dbReference type="EMBL" id="AL009126">
    <property type="protein sequence ID" value="CAB13014.1"/>
    <property type="molecule type" value="Genomic_DNA"/>
</dbReference>
<dbReference type="PIR" id="B69844">
    <property type="entry name" value="B69844"/>
</dbReference>
<dbReference type="RefSeq" id="NP_389039.1">
    <property type="nucleotide sequence ID" value="NC_000964.3"/>
</dbReference>
<dbReference type="RefSeq" id="WP_010886480.1">
    <property type="nucleotide sequence ID" value="NC_000964.3"/>
</dbReference>
<dbReference type="SMR" id="O31608"/>
<dbReference type="FunCoup" id="O31608">
    <property type="interactions" value="72"/>
</dbReference>
<dbReference type="STRING" id="224308.BSU11570"/>
<dbReference type="CAZy" id="GH23">
    <property type="family name" value="Glycoside Hydrolase Family 23"/>
</dbReference>
<dbReference type="PaxDb" id="224308-BSU11570"/>
<dbReference type="DNASU" id="939382"/>
<dbReference type="EnsemblBacteria" id="CAB13014">
    <property type="protein sequence ID" value="CAB13014"/>
    <property type="gene ID" value="BSU_11570"/>
</dbReference>
<dbReference type="GeneID" id="939382"/>
<dbReference type="KEGG" id="bsu:BSU11570"/>
<dbReference type="eggNOG" id="COG0741">
    <property type="taxonomic scope" value="Bacteria"/>
</dbReference>
<dbReference type="InParanoid" id="O31608"/>
<dbReference type="OrthoDB" id="9815002at2"/>
<dbReference type="PhylomeDB" id="O31608"/>
<dbReference type="BioCyc" id="BSUB:BSU11570-MONOMER"/>
<dbReference type="Proteomes" id="UP000001570">
    <property type="component" value="Chromosome"/>
</dbReference>
<dbReference type="GO" id="GO:0005576">
    <property type="term" value="C:extracellular region"/>
    <property type="evidence" value="ECO:0007669"/>
    <property type="project" value="UniProtKB-SubCell"/>
</dbReference>
<dbReference type="GO" id="GO:0016020">
    <property type="term" value="C:membrane"/>
    <property type="evidence" value="ECO:0007669"/>
    <property type="project" value="InterPro"/>
</dbReference>
<dbReference type="GO" id="GO:0016787">
    <property type="term" value="F:hydrolase activity"/>
    <property type="evidence" value="ECO:0007669"/>
    <property type="project" value="UniProtKB-KW"/>
</dbReference>
<dbReference type="GO" id="GO:0008933">
    <property type="term" value="F:peptidoglycan lytic transglycosylase activity"/>
    <property type="evidence" value="ECO:0007669"/>
    <property type="project" value="InterPro"/>
</dbReference>
<dbReference type="GO" id="GO:0071555">
    <property type="term" value="P:cell wall organization"/>
    <property type="evidence" value="ECO:0007669"/>
    <property type="project" value="UniProtKB-KW"/>
</dbReference>
<dbReference type="GO" id="GO:0000270">
    <property type="term" value="P:peptidoglycan metabolic process"/>
    <property type="evidence" value="ECO:0007669"/>
    <property type="project" value="InterPro"/>
</dbReference>
<dbReference type="CDD" id="cd00254">
    <property type="entry name" value="LT-like"/>
    <property type="match status" value="1"/>
</dbReference>
<dbReference type="Gene3D" id="1.10.530.10">
    <property type="match status" value="1"/>
</dbReference>
<dbReference type="InterPro" id="IPR023346">
    <property type="entry name" value="Lysozyme-like_dom_sf"/>
</dbReference>
<dbReference type="InterPro" id="IPR000189">
    <property type="entry name" value="Transglyc_AS"/>
</dbReference>
<dbReference type="InterPro" id="IPR008258">
    <property type="entry name" value="Transglycosylase_SLT_dom_1"/>
</dbReference>
<dbReference type="PANTHER" id="PTHR37423:SF2">
    <property type="entry name" value="MEMBRANE-BOUND LYTIC MUREIN TRANSGLYCOSYLASE C"/>
    <property type="match status" value="1"/>
</dbReference>
<dbReference type="PANTHER" id="PTHR37423">
    <property type="entry name" value="SOLUBLE LYTIC MUREIN TRANSGLYCOSYLASE-RELATED"/>
    <property type="match status" value="1"/>
</dbReference>
<dbReference type="Pfam" id="PF01464">
    <property type="entry name" value="SLT"/>
    <property type="match status" value="1"/>
</dbReference>
<dbReference type="SUPFAM" id="SSF53955">
    <property type="entry name" value="Lysozyme-like"/>
    <property type="match status" value="1"/>
</dbReference>
<dbReference type="PROSITE" id="PS00922">
    <property type="entry name" value="TRANSGLYCOSYLASE"/>
    <property type="match status" value="1"/>
</dbReference>
<keyword id="KW-0961">Cell wall biogenesis/degradation</keyword>
<keyword id="KW-0378">Hydrolase</keyword>
<keyword id="KW-0456">Lyase</keyword>
<keyword id="KW-1185">Reference proteome</keyword>
<keyword id="KW-0964">Secreted</keyword>
<accession>O31608</accession>
<evidence type="ECO:0000255" key="1">
    <source>
        <dbReference type="PROSITE-ProRule" id="PRU10071"/>
    </source>
</evidence>
<evidence type="ECO:0000269" key="2">
    <source>
    </source>
</evidence>
<evidence type="ECO:0000269" key="3">
    <source>
    </source>
</evidence>
<evidence type="ECO:0000303" key="4">
    <source>
    </source>
</evidence>
<evidence type="ECO:0000305" key="5"/>
<proteinExistence type="evidence at protein level"/>
<gene>
    <name evidence="4" type="primary">cwlQ</name>
    <name type="synonym">yjbJ</name>
    <name type="ordered locus">BSU11570</name>
</gene>